<sequence length="78" mass="9126">MKQIFIGIIRFYQKFISPMTPPTCRFYPTCSHYGLEAFQKHGTFKGFWLTCKRILKCHPFHPGGFDPVPDKKDDKVNS</sequence>
<comment type="function">
    <text evidence="1">Could be involved in insertion of integral membrane proteins into the membrane.</text>
</comment>
<comment type="subcellular location">
    <subcellularLocation>
        <location evidence="1">Cell membrane</location>
        <topology evidence="1">Peripheral membrane protein</topology>
        <orientation evidence="1">Cytoplasmic side</orientation>
    </subcellularLocation>
</comment>
<comment type="similarity">
    <text evidence="1">Belongs to the UPF0161 family.</text>
</comment>
<evidence type="ECO:0000255" key="1">
    <source>
        <dbReference type="HAMAP-Rule" id="MF_00386"/>
    </source>
</evidence>
<dbReference type="EMBL" id="CP000903">
    <property type="protein sequence ID" value="ABY45781.1"/>
    <property type="molecule type" value="Genomic_DNA"/>
</dbReference>
<dbReference type="KEGG" id="bwe:BcerKBAB4_4627"/>
<dbReference type="eggNOG" id="COG0759">
    <property type="taxonomic scope" value="Bacteria"/>
</dbReference>
<dbReference type="HOGENOM" id="CLU_144811_6_0_9"/>
<dbReference type="Proteomes" id="UP000002154">
    <property type="component" value="Chromosome"/>
</dbReference>
<dbReference type="GO" id="GO:0005886">
    <property type="term" value="C:plasma membrane"/>
    <property type="evidence" value="ECO:0007669"/>
    <property type="project" value="UniProtKB-SubCell"/>
</dbReference>
<dbReference type="HAMAP" id="MF_00386">
    <property type="entry name" value="UPF0161_YidD"/>
    <property type="match status" value="1"/>
</dbReference>
<dbReference type="InterPro" id="IPR002696">
    <property type="entry name" value="Membr_insert_effic_factor_YidD"/>
</dbReference>
<dbReference type="NCBIfam" id="TIGR00278">
    <property type="entry name" value="membrane protein insertion efficiency factor YidD"/>
    <property type="match status" value="1"/>
</dbReference>
<dbReference type="PANTHER" id="PTHR33383">
    <property type="entry name" value="MEMBRANE PROTEIN INSERTION EFFICIENCY FACTOR-RELATED"/>
    <property type="match status" value="1"/>
</dbReference>
<dbReference type="PANTHER" id="PTHR33383:SF1">
    <property type="entry name" value="MEMBRANE PROTEIN INSERTION EFFICIENCY FACTOR-RELATED"/>
    <property type="match status" value="1"/>
</dbReference>
<dbReference type="Pfam" id="PF01809">
    <property type="entry name" value="YidD"/>
    <property type="match status" value="1"/>
</dbReference>
<dbReference type="SMART" id="SM01234">
    <property type="entry name" value="Haemolytic"/>
    <property type="match status" value="1"/>
</dbReference>
<reference key="1">
    <citation type="journal article" date="2008" name="Chem. Biol. Interact.">
        <title>Extending the Bacillus cereus group genomics to putative food-borne pathogens of different toxicity.</title>
        <authorList>
            <person name="Lapidus A."/>
            <person name="Goltsman E."/>
            <person name="Auger S."/>
            <person name="Galleron N."/>
            <person name="Segurens B."/>
            <person name="Dossat C."/>
            <person name="Land M.L."/>
            <person name="Broussolle V."/>
            <person name="Brillard J."/>
            <person name="Guinebretiere M.-H."/>
            <person name="Sanchis V."/>
            <person name="Nguen-the C."/>
            <person name="Lereclus D."/>
            <person name="Richardson P."/>
            <person name="Wincker P."/>
            <person name="Weissenbach J."/>
            <person name="Ehrlich S.D."/>
            <person name="Sorokin A."/>
        </authorList>
    </citation>
    <scope>NUCLEOTIDE SEQUENCE [LARGE SCALE GENOMIC DNA]</scope>
    <source>
        <strain>KBAB4</strain>
    </source>
</reference>
<feature type="chain" id="PRO_1000122618" description="Putative membrane protein insertion efficiency factor">
    <location>
        <begin position="1"/>
        <end position="78"/>
    </location>
</feature>
<name>YIDD_BACMK</name>
<organism>
    <name type="scientific">Bacillus mycoides (strain KBAB4)</name>
    <name type="common">Bacillus weihenstephanensis</name>
    <dbReference type="NCBI Taxonomy" id="315730"/>
    <lineage>
        <taxon>Bacteria</taxon>
        <taxon>Bacillati</taxon>
        <taxon>Bacillota</taxon>
        <taxon>Bacilli</taxon>
        <taxon>Bacillales</taxon>
        <taxon>Bacillaceae</taxon>
        <taxon>Bacillus</taxon>
        <taxon>Bacillus cereus group</taxon>
    </lineage>
</organism>
<keyword id="KW-1003">Cell membrane</keyword>
<keyword id="KW-0472">Membrane</keyword>
<protein>
    <recommendedName>
        <fullName evidence="1">Putative membrane protein insertion efficiency factor</fullName>
    </recommendedName>
</protein>
<gene>
    <name type="ordered locus">BcerKBAB4_4627</name>
</gene>
<proteinExistence type="inferred from homology"/>
<accession>A9VLF7</accession>